<proteinExistence type="inferred from homology"/>
<evidence type="ECO:0000250" key="1"/>
<evidence type="ECO:0000255" key="2">
    <source>
        <dbReference type="PROSITE-ProRule" id="PRU01185"/>
    </source>
</evidence>
<evidence type="ECO:0000256" key="3">
    <source>
        <dbReference type="SAM" id="MobiDB-lite"/>
    </source>
</evidence>
<dbReference type="EMBL" id="AE016817">
    <property type="protein sequence ID" value="AAS51767.1"/>
    <property type="molecule type" value="Genomic_DNA"/>
</dbReference>
<dbReference type="RefSeq" id="NP_983943.1">
    <property type="nucleotide sequence ID" value="NM_209296.1"/>
</dbReference>
<dbReference type="SMR" id="Q75AS3"/>
<dbReference type="FunCoup" id="Q75AS3">
    <property type="interactions" value="155"/>
</dbReference>
<dbReference type="STRING" id="284811.Q75AS3"/>
<dbReference type="EnsemblFungi" id="AAS51767">
    <property type="protein sequence ID" value="AAS51767"/>
    <property type="gene ID" value="AGOS_ADL153W"/>
</dbReference>
<dbReference type="GeneID" id="4620085"/>
<dbReference type="KEGG" id="ago:AGOS_ADL153W"/>
<dbReference type="eggNOG" id="ENOG502RXR9">
    <property type="taxonomic scope" value="Eukaryota"/>
</dbReference>
<dbReference type="HOGENOM" id="CLU_031729_0_0_1"/>
<dbReference type="InParanoid" id="Q75AS3"/>
<dbReference type="OMA" id="DFMMSDD"/>
<dbReference type="OrthoDB" id="4047547at2759"/>
<dbReference type="Proteomes" id="UP000000591">
    <property type="component" value="Chromosome IV"/>
</dbReference>
<dbReference type="GO" id="GO:0008180">
    <property type="term" value="C:COP9 signalosome"/>
    <property type="evidence" value="ECO:0000318"/>
    <property type="project" value="GO_Central"/>
</dbReference>
<dbReference type="GO" id="GO:0005737">
    <property type="term" value="C:cytoplasm"/>
    <property type="evidence" value="ECO:0007669"/>
    <property type="project" value="UniProtKB-SubCell"/>
</dbReference>
<dbReference type="GO" id="GO:0000338">
    <property type="term" value="P:protein deneddylation"/>
    <property type="evidence" value="ECO:0000318"/>
    <property type="project" value="GO_Central"/>
</dbReference>
<dbReference type="InterPro" id="IPR050871">
    <property type="entry name" value="26S_Proteasome/COP9_Components"/>
</dbReference>
<dbReference type="InterPro" id="IPR000717">
    <property type="entry name" value="PCI_dom"/>
</dbReference>
<dbReference type="PANTHER" id="PTHR10678">
    <property type="entry name" value="26S PROTEASOME NON-ATPASE REGULATORY SUBUNIT 11/COP9 SIGNALOSOME COMPLEX SUBUNIT 2"/>
    <property type="match status" value="1"/>
</dbReference>
<dbReference type="PROSITE" id="PS50250">
    <property type="entry name" value="PCI"/>
    <property type="match status" value="1"/>
</dbReference>
<protein>
    <recommendedName>
        <fullName>COP9 signalosome complex subunit 10</fullName>
    </recommendedName>
</protein>
<keyword id="KW-0963">Cytoplasm</keyword>
<keyword id="KW-0539">Nucleus</keyword>
<keyword id="KW-1185">Reference proteome</keyword>
<keyword id="KW-0736">Signalosome</keyword>
<feature type="chain" id="PRO_0000121021" description="COP9 signalosome complex subunit 10">
    <location>
        <begin position="1"/>
        <end position="553"/>
    </location>
</feature>
<feature type="domain" description="PCI" evidence="2">
    <location>
        <begin position="298"/>
        <end position="474"/>
    </location>
</feature>
<feature type="region of interest" description="Disordered" evidence="3">
    <location>
        <begin position="21"/>
        <end position="47"/>
    </location>
</feature>
<feature type="compositionally biased region" description="Acidic residues" evidence="3">
    <location>
        <begin position="21"/>
        <end position="46"/>
    </location>
</feature>
<gene>
    <name type="primary">RRI2</name>
    <name type="synonym">CSN10</name>
    <name type="ordered locus">ADL153W</name>
</gene>
<accession>Q75AS3</accession>
<name>CSN10_EREGS</name>
<comment type="function">
    <text evidence="1">Component of the COP9 signalosome (CSN) complex that acts as an regulator of the ubiquitin (Ubl) conjugation pathway by mediating the deneddylation of the cullin subunit of SCF-type E3 ubiquitin-protein ligase complexes. The CSN complex is involved in the regulation of the mating pheromone response (By similarity).</text>
</comment>
<comment type="subunit">
    <text>Component of a COP9 signalosome-like (CSN) complex.</text>
</comment>
<comment type="subcellular location">
    <subcellularLocation>
        <location evidence="1">Cytoplasm</location>
    </subcellularLocation>
    <subcellularLocation>
        <location evidence="1">Nucleus</location>
    </subcellularLocation>
</comment>
<organism>
    <name type="scientific">Eremothecium gossypii (strain ATCC 10895 / CBS 109.51 / FGSC 9923 / NRRL Y-1056)</name>
    <name type="common">Yeast</name>
    <name type="synonym">Ashbya gossypii</name>
    <dbReference type="NCBI Taxonomy" id="284811"/>
    <lineage>
        <taxon>Eukaryota</taxon>
        <taxon>Fungi</taxon>
        <taxon>Dikarya</taxon>
        <taxon>Ascomycota</taxon>
        <taxon>Saccharomycotina</taxon>
        <taxon>Saccharomycetes</taxon>
        <taxon>Saccharomycetales</taxon>
        <taxon>Saccharomycetaceae</taxon>
        <taxon>Eremothecium</taxon>
    </lineage>
</organism>
<sequence>MSEGDAYEDFMMSEDEEMHYAEMEEDSDEMGVYEEETSQGAEEEVPLDPSSSIVEGRYYRAKGLKENSKFREAIEALEGVATSSEPLWAFRALKQIAKCWNFKGAQASEGYQDGVRTALVRLLEHGLRWRQKLGAAYVERSLISTLRMLVPANSQNFVFDEAHEICLPTIEFHLRLLDAVAPLPGDFKDLCTLHMQLRLENLIWRERLRGADCTAILSEAPAPQLTAETLLLLLQCHICRFLRLCQPPAQQFAELVSELQDRAERSLALAQQPHAMVLLAFAQCMRGMQQQPQPHSALRTHFSACLQGLEEIGSNSSFFRDLNLCGFVLADALAYSAGRCSHRVDPFALEQIRILRETPIVHNLQLLYESYVALDLPSFARALDLLAPFRSALAPLFARLCALARERKLWDAIAPLHSCIALADIQRLLCIGSSSLSRDSLLTLMMQGVMASSARVPFRLDLTRDYVYFGDEPRVQLRAPAARPGLRHCAHDLGLTSACARPFQGSSALQLMDCLSEHRNRAASAAADPADAVCRARQPLAAYRTLAALILDE</sequence>
<reference key="1">
    <citation type="journal article" date="2004" name="Science">
        <title>The Ashbya gossypii genome as a tool for mapping the ancient Saccharomyces cerevisiae genome.</title>
        <authorList>
            <person name="Dietrich F.S."/>
            <person name="Voegeli S."/>
            <person name="Brachat S."/>
            <person name="Lerch A."/>
            <person name="Gates K."/>
            <person name="Steiner S."/>
            <person name="Mohr C."/>
            <person name="Poehlmann R."/>
            <person name="Luedi P."/>
            <person name="Choi S."/>
            <person name="Wing R.A."/>
            <person name="Flavier A."/>
            <person name="Gaffney T.D."/>
            <person name="Philippsen P."/>
        </authorList>
    </citation>
    <scope>NUCLEOTIDE SEQUENCE [LARGE SCALE GENOMIC DNA]</scope>
    <source>
        <strain>ATCC 10895 / CBS 109.51 / FGSC 9923 / NRRL Y-1056</strain>
    </source>
</reference>
<reference key="2">
    <citation type="journal article" date="2013" name="G3 (Bethesda)">
        <title>Genomes of Ashbya fungi isolated from insects reveal four mating-type loci, numerous translocations, lack of transposons, and distinct gene duplications.</title>
        <authorList>
            <person name="Dietrich F.S."/>
            <person name="Voegeli S."/>
            <person name="Kuo S."/>
            <person name="Philippsen P."/>
        </authorList>
    </citation>
    <scope>GENOME REANNOTATION</scope>
    <source>
        <strain>ATCC 10895 / CBS 109.51 / FGSC 9923 / NRRL Y-1056</strain>
    </source>
</reference>